<protein>
    <recommendedName>
        <fullName evidence="1">Glutamate 5-kinase</fullName>
        <ecNumber evidence="1">2.7.2.11</ecNumber>
    </recommendedName>
    <alternativeName>
        <fullName evidence="1">Gamma-glutamyl kinase</fullName>
        <shortName evidence="1">GK</shortName>
    </alternativeName>
</protein>
<proteinExistence type="inferred from homology"/>
<reference key="1">
    <citation type="journal article" date="2005" name="Proc. Natl. Acad. Sci. U.S.A.">
        <title>Complete genome sequence of Vibrio fischeri: a symbiotic bacterium with pathogenic congeners.</title>
        <authorList>
            <person name="Ruby E.G."/>
            <person name="Urbanowski M."/>
            <person name="Campbell J."/>
            <person name="Dunn A."/>
            <person name="Faini M."/>
            <person name="Gunsalus R."/>
            <person name="Lostroh P."/>
            <person name="Lupp C."/>
            <person name="McCann J."/>
            <person name="Millikan D."/>
            <person name="Schaefer A."/>
            <person name="Stabb E."/>
            <person name="Stevens A."/>
            <person name="Visick K."/>
            <person name="Whistler C."/>
            <person name="Greenberg E.P."/>
        </authorList>
    </citation>
    <scope>NUCLEOTIDE SEQUENCE [LARGE SCALE GENOMIC DNA]</scope>
    <source>
        <strain>ATCC 700601 / ES114</strain>
    </source>
</reference>
<gene>
    <name evidence="1" type="primary">proB</name>
    <name type="ordered locus">VF_0740</name>
</gene>
<name>PROB_ALIF1</name>
<keyword id="KW-0028">Amino-acid biosynthesis</keyword>
<keyword id="KW-0067">ATP-binding</keyword>
<keyword id="KW-0963">Cytoplasm</keyword>
<keyword id="KW-0418">Kinase</keyword>
<keyword id="KW-0547">Nucleotide-binding</keyword>
<keyword id="KW-0641">Proline biosynthesis</keyword>
<keyword id="KW-1185">Reference proteome</keyword>
<keyword id="KW-0808">Transferase</keyword>
<accession>Q5E6W1</accession>
<feature type="chain" id="PRO_0000109752" description="Glutamate 5-kinase">
    <location>
        <begin position="1"/>
        <end position="369"/>
    </location>
</feature>
<feature type="domain" description="PUA" evidence="1">
    <location>
        <begin position="277"/>
        <end position="355"/>
    </location>
</feature>
<feature type="binding site" evidence="1">
    <location>
        <position position="11"/>
    </location>
    <ligand>
        <name>ATP</name>
        <dbReference type="ChEBI" id="CHEBI:30616"/>
    </ligand>
</feature>
<feature type="binding site" evidence="1">
    <location>
        <position position="51"/>
    </location>
    <ligand>
        <name>substrate</name>
    </ligand>
</feature>
<feature type="binding site" evidence="1">
    <location>
        <position position="138"/>
    </location>
    <ligand>
        <name>substrate</name>
    </ligand>
</feature>
<feature type="binding site" evidence="1">
    <location>
        <position position="150"/>
    </location>
    <ligand>
        <name>substrate</name>
    </ligand>
</feature>
<feature type="binding site" evidence="1">
    <location>
        <begin position="170"/>
        <end position="171"/>
    </location>
    <ligand>
        <name>ATP</name>
        <dbReference type="ChEBI" id="CHEBI:30616"/>
    </ligand>
</feature>
<feature type="binding site" evidence="1">
    <location>
        <begin position="212"/>
        <end position="218"/>
    </location>
    <ligand>
        <name>ATP</name>
        <dbReference type="ChEBI" id="CHEBI:30616"/>
    </ligand>
</feature>
<dbReference type="EC" id="2.7.2.11" evidence="1"/>
<dbReference type="EMBL" id="CP000020">
    <property type="protein sequence ID" value="AAW85235.1"/>
    <property type="molecule type" value="Genomic_DNA"/>
</dbReference>
<dbReference type="RefSeq" id="WP_011261449.1">
    <property type="nucleotide sequence ID" value="NZ_CAWLES010000001.1"/>
</dbReference>
<dbReference type="RefSeq" id="YP_204123.1">
    <property type="nucleotide sequence ID" value="NC_006840.2"/>
</dbReference>
<dbReference type="SMR" id="Q5E6W1"/>
<dbReference type="STRING" id="312309.VF_0740"/>
<dbReference type="EnsemblBacteria" id="AAW85235">
    <property type="protein sequence ID" value="AAW85235"/>
    <property type="gene ID" value="VF_0740"/>
</dbReference>
<dbReference type="GeneID" id="54163394"/>
<dbReference type="KEGG" id="vfi:VF_0740"/>
<dbReference type="PATRIC" id="fig|312309.11.peg.733"/>
<dbReference type="eggNOG" id="COG0263">
    <property type="taxonomic scope" value="Bacteria"/>
</dbReference>
<dbReference type="HOGENOM" id="CLU_025400_2_0_6"/>
<dbReference type="OrthoDB" id="9804434at2"/>
<dbReference type="UniPathway" id="UPA00098">
    <property type="reaction ID" value="UER00359"/>
</dbReference>
<dbReference type="Proteomes" id="UP000000537">
    <property type="component" value="Chromosome I"/>
</dbReference>
<dbReference type="GO" id="GO:0005829">
    <property type="term" value="C:cytosol"/>
    <property type="evidence" value="ECO:0007669"/>
    <property type="project" value="TreeGrafter"/>
</dbReference>
<dbReference type="GO" id="GO:0005524">
    <property type="term" value="F:ATP binding"/>
    <property type="evidence" value="ECO:0007669"/>
    <property type="project" value="UniProtKB-KW"/>
</dbReference>
<dbReference type="GO" id="GO:0004349">
    <property type="term" value="F:glutamate 5-kinase activity"/>
    <property type="evidence" value="ECO:0007669"/>
    <property type="project" value="UniProtKB-UniRule"/>
</dbReference>
<dbReference type="GO" id="GO:0003723">
    <property type="term" value="F:RNA binding"/>
    <property type="evidence" value="ECO:0007669"/>
    <property type="project" value="InterPro"/>
</dbReference>
<dbReference type="GO" id="GO:0055129">
    <property type="term" value="P:L-proline biosynthetic process"/>
    <property type="evidence" value="ECO:0007669"/>
    <property type="project" value="UniProtKB-UniRule"/>
</dbReference>
<dbReference type="CDD" id="cd04242">
    <property type="entry name" value="AAK_G5K_ProB"/>
    <property type="match status" value="1"/>
</dbReference>
<dbReference type="CDD" id="cd21157">
    <property type="entry name" value="PUA_G5K"/>
    <property type="match status" value="1"/>
</dbReference>
<dbReference type="FunFam" id="2.30.130.10:FF:000003">
    <property type="entry name" value="Glutamate 5-kinase"/>
    <property type="match status" value="1"/>
</dbReference>
<dbReference type="FunFam" id="3.40.1160.10:FF:000006">
    <property type="entry name" value="Glutamate 5-kinase"/>
    <property type="match status" value="1"/>
</dbReference>
<dbReference type="Gene3D" id="3.40.1160.10">
    <property type="entry name" value="Acetylglutamate kinase-like"/>
    <property type="match status" value="2"/>
</dbReference>
<dbReference type="Gene3D" id="2.30.130.10">
    <property type="entry name" value="PUA domain"/>
    <property type="match status" value="1"/>
</dbReference>
<dbReference type="HAMAP" id="MF_00456">
    <property type="entry name" value="ProB"/>
    <property type="match status" value="1"/>
</dbReference>
<dbReference type="InterPro" id="IPR036393">
    <property type="entry name" value="AceGlu_kinase-like_sf"/>
</dbReference>
<dbReference type="InterPro" id="IPR001048">
    <property type="entry name" value="Asp/Glu/Uridylate_kinase"/>
</dbReference>
<dbReference type="InterPro" id="IPR041739">
    <property type="entry name" value="G5K_ProB"/>
</dbReference>
<dbReference type="InterPro" id="IPR001057">
    <property type="entry name" value="Glu/AcGlu_kinase"/>
</dbReference>
<dbReference type="InterPro" id="IPR011529">
    <property type="entry name" value="Glu_5kinase"/>
</dbReference>
<dbReference type="InterPro" id="IPR005715">
    <property type="entry name" value="Glu_5kinase/COase_Synthase"/>
</dbReference>
<dbReference type="InterPro" id="IPR019797">
    <property type="entry name" value="Glutamate_5-kinase_CS"/>
</dbReference>
<dbReference type="InterPro" id="IPR002478">
    <property type="entry name" value="PUA"/>
</dbReference>
<dbReference type="InterPro" id="IPR015947">
    <property type="entry name" value="PUA-like_sf"/>
</dbReference>
<dbReference type="InterPro" id="IPR036974">
    <property type="entry name" value="PUA_sf"/>
</dbReference>
<dbReference type="NCBIfam" id="TIGR01027">
    <property type="entry name" value="proB"/>
    <property type="match status" value="1"/>
</dbReference>
<dbReference type="PANTHER" id="PTHR43654">
    <property type="entry name" value="GLUTAMATE 5-KINASE"/>
    <property type="match status" value="1"/>
</dbReference>
<dbReference type="PANTHER" id="PTHR43654:SF1">
    <property type="entry name" value="ISOPENTENYL PHOSPHATE KINASE"/>
    <property type="match status" value="1"/>
</dbReference>
<dbReference type="Pfam" id="PF00696">
    <property type="entry name" value="AA_kinase"/>
    <property type="match status" value="1"/>
</dbReference>
<dbReference type="Pfam" id="PF01472">
    <property type="entry name" value="PUA"/>
    <property type="match status" value="1"/>
</dbReference>
<dbReference type="PIRSF" id="PIRSF000729">
    <property type="entry name" value="GK"/>
    <property type="match status" value="1"/>
</dbReference>
<dbReference type="PRINTS" id="PR00474">
    <property type="entry name" value="GLU5KINASE"/>
</dbReference>
<dbReference type="SMART" id="SM00359">
    <property type="entry name" value="PUA"/>
    <property type="match status" value="1"/>
</dbReference>
<dbReference type="SUPFAM" id="SSF53633">
    <property type="entry name" value="Carbamate kinase-like"/>
    <property type="match status" value="1"/>
</dbReference>
<dbReference type="SUPFAM" id="SSF88697">
    <property type="entry name" value="PUA domain-like"/>
    <property type="match status" value="1"/>
</dbReference>
<dbReference type="PROSITE" id="PS00902">
    <property type="entry name" value="GLUTAMATE_5_KINASE"/>
    <property type="match status" value="1"/>
</dbReference>
<dbReference type="PROSITE" id="PS50890">
    <property type="entry name" value="PUA"/>
    <property type="match status" value="1"/>
</dbReference>
<sequence length="369" mass="39327">MNTQSQTIVVKLGTSVLTGGTLKLDRAHMVELVRQCVQLKKAGHQVIVVTSGAIAAGREHLNYPELPKTMANKQLLAAVGQSCLIQAWQSLFGIYGVDVGQMLLTRADLDDRERYLNARDMLQALLKNNIVPIVNENDAVATNEIKVGDNDNLSALVGILAGADKLLLLTDQSGLFTADPRKDPKAELIKEVHTIDETLRKIAGGSGTTLGTGGMATKLQAADVARRAGIEVIIAAGSAENVITDVVNSKPQGTKFLPVECALESRKRWILAGPPSKGSIVIDEGAVNAVQQKGSSLLSKGITEVSGHFVRGGVAKIVNTKGELIARGISRYSSDDLSKILGKHSQDIYAVLGYEYGPVAIHRDDLVLI</sequence>
<evidence type="ECO:0000255" key="1">
    <source>
        <dbReference type="HAMAP-Rule" id="MF_00456"/>
    </source>
</evidence>
<organism>
    <name type="scientific">Aliivibrio fischeri (strain ATCC 700601 / ES114)</name>
    <name type="common">Vibrio fischeri</name>
    <dbReference type="NCBI Taxonomy" id="312309"/>
    <lineage>
        <taxon>Bacteria</taxon>
        <taxon>Pseudomonadati</taxon>
        <taxon>Pseudomonadota</taxon>
        <taxon>Gammaproteobacteria</taxon>
        <taxon>Vibrionales</taxon>
        <taxon>Vibrionaceae</taxon>
        <taxon>Aliivibrio</taxon>
    </lineage>
</organism>
<comment type="function">
    <text evidence="1">Catalyzes the transfer of a phosphate group to glutamate to form L-glutamate 5-phosphate.</text>
</comment>
<comment type="catalytic activity">
    <reaction evidence="1">
        <text>L-glutamate + ATP = L-glutamyl 5-phosphate + ADP</text>
        <dbReference type="Rhea" id="RHEA:14877"/>
        <dbReference type="ChEBI" id="CHEBI:29985"/>
        <dbReference type="ChEBI" id="CHEBI:30616"/>
        <dbReference type="ChEBI" id="CHEBI:58274"/>
        <dbReference type="ChEBI" id="CHEBI:456216"/>
        <dbReference type="EC" id="2.7.2.11"/>
    </reaction>
</comment>
<comment type="pathway">
    <text evidence="1">Amino-acid biosynthesis; L-proline biosynthesis; L-glutamate 5-semialdehyde from L-glutamate: step 1/2.</text>
</comment>
<comment type="subcellular location">
    <subcellularLocation>
        <location evidence="1">Cytoplasm</location>
    </subcellularLocation>
</comment>
<comment type="similarity">
    <text evidence="1">Belongs to the glutamate 5-kinase family.</text>
</comment>